<sequence length="213" mass="22948">MAKNYYDITLALAGICQSARLVQQLAHQGHCDADALHVSLNSIIDMNPSSTLAVFGGSEANLRVGLETLLGVLNASSRQGLNAELTRYTLSLMVLERKLSSAKGALDTLGNRINGLQRQLEHFDLQSETLMSAMAAIYVDVISPLGPRIQVTGSPAVLQSPQVQAKVRATLLAGIRAAVLWHQVGGGRLQLMFSRNRLTTQAKQILAHLTPEL</sequence>
<comment type="function">
    <text evidence="1">Negative regulator of phage lambda lysogenization. Contributes to the degradation of the phage regulatory protein CII. Acts probably by holding CII on the membrane surface, away from the target promoters, but close to the FtsH protease.</text>
</comment>
<comment type="subunit">
    <text evidence="1">Interacts with CII protein from phage lambda.</text>
</comment>
<comment type="subcellular location">
    <subcellularLocation>
        <location>Cytoplasm</location>
    </subcellularLocation>
    <subcellularLocation>
        <location evidence="1">Cell inner membrane</location>
        <topology evidence="1">Peripheral membrane protein</topology>
        <orientation evidence="1">Cytoplasmic side</orientation>
    </subcellularLocation>
</comment>
<comment type="similarity">
    <text evidence="1">Belongs to the HflD family.</text>
</comment>
<organism>
    <name type="scientific">Escherichia coli O139:H28 (strain E24377A / ETEC)</name>
    <dbReference type="NCBI Taxonomy" id="331111"/>
    <lineage>
        <taxon>Bacteria</taxon>
        <taxon>Pseudomonadati</taxon>
        <taxon>Pseudomonadota</taxon>
        <taxon>Gammaproteobacteria</taxon>
        <taxon>Enterobacterales</taxon>
        <taxon>Enterobacteriaceae</taxon>
        <taxon>Escherichia</taxon>
    </lineage>
</organism>
<dbReference type="EMBL" id="CP000800">
    <property type="protein sequence ID" value="ABV18309.1"/>
    <property type="molecule type" value="Genomic_DNA"/>
</dbReference>
<dbReference type="RefSeq" id="WP_001297479.1">
    <property type="nucleotide sequence ID" value="NC_009801.1"/>
</dbReference>
<dbReference type="SMR" id="A7ZKS2"/>
<dbReference type="GeneID" id="93776278"/>
<dbReference type="KEGG" id="ecw:EcE24377A_1295"/>
<dbReference type="HOGENOM" id="CLU_098920_0_0_6"/>
<dbReference type="Proteomes" id="UP000001122">
    <property type="component" value="Chromosome"/>
</dbReference>
<dbReference type="GO" id="GO:0005737">
    <property type="term" value="C:cytoplasm"/>
    <property type="evidence" value="ECO:0007669"/>
    <property type="project" value="UniProtKB-SubCell"/>
</dbReference>
<dbReference type="GO" id="GO:0005886">
    <property type="term" value="C:plasma membrane"/>
    <property type="evidence" value="ECO:0007669"/>
    <property type="project" value="UniProtKB-SubCell"/>
</dbReference>
<dbReference type="FunFam" id="1.10.3890.10:FF:000001">
    <property type="entry name" value="High frequency lysogenization protein HflD homolog"/>
    <property type="match status" value="1"/>
</dbReference>
<dbReference type="Gene3D" id="1.10.3890.10">
    <property type="entry name" value="HflD-like"/>
    <property type="match status" value="1"/>
</dbReference>
<dbReference type="HAMAP" id="MF_00695">
    <property type="entry name" value="HflD_protein"/>
    <property type="match status" value="1"/>
</dbReference>
<dbReference type="InterPro" id="IPR007451">
    <property type="entry name" value="HflD"/>
</dbReference>
<dbReference type="InterPro" id="IPR035932">
    <property type="entry name" value="HflD-like_sf"/>
</dbReference>
<dbReference type="NCBIfam" id="NF001245">
    <property type="entry name" value="PRK00218.1-1"/>
    <property type="match status" value="1"/>
</dbReference>
<dbReference type="NCBIfam" id="NF001246">
    <property type="entry name" value="PRK00218.1-2"/>
    <property type="match status" value="1"/>
</dbReference>
<dbReference type="NCBIfam" id="NF001248">
    <property type="entry name" value="PRK00218.1-4"/>
    <property type="match status" value="1"/>
</dbReference>
<dbReference type="NCBIfam" id="NF001249">
    <property type="entry name" value="PRK00218.1-5"/>
    <property type="match status" value="1"/>
</dbReference>
<dbReference type="PANTHER" id="PTHR38100">
    <property type="entry name" value="HIGH FREQUENCY LYSOGENIZATION PROTEIN HFLD"/>
    <property type="match status" value="1"/>
</dbReference>
<dbReference type="PANTHER" id="PTHR38100:SF1">
    <property type="entry name" value="HIGH FREQUENCY LYSOGENIZATION PROTEIN HFLD"/>
    <property type="match status" value="1"/>
</dbReference>
<dbReference type="Pfam" id="PF04356">
    <property type="entry name" value="DUF489"/>
    <property type="match status" value="1"/>
</dbReference>
<dbReference type="SUPFAM" id="SSF101322">
    <property type="entry name" value="YcfC-like"/>
    <property type="match status" value="1"/>
</dbReference>
<gene>
    <name evidence="1" type="primary">hflD</name>
    <name type="ordered locus">EcE24377A_1295</name>
</gene>
<feature type="chain" id="PRO_1000062046" description="High frequency lysogenization protein HflD">
    <location>
        <begin position="1"/>
        <end position="213"/>
    </location>
</feature>
<feature type="coiled-coil region" evidence="1">
    <location>
        <begin position="79"/>
        <end position="126"/>
    </location>
</feature>
<name>HFLD_ECO24</name>
<accession>A7ZKS2</accession>
<reference key="1">
    <citation type="journal article" date="2008" name="J. Bacteriol.">
        <title>The pangenome structure of Escherichia coli: comparative genomic analysis of E. coli commensal and pathogenic isolates.</title>
        <authorList>
            <person name="Rasko D.A."/>
            <person name="Rosovitz M.J."/>
            <person name="Myers G.S.A."/>
            <person name="Mongodin E.F."/>
            <person name="Fricke W.F."/>
            <person name="Gajer P."/>
            <person name="Crabtree J."/>
            <person name="Sebaihia M."/>
            <person name="Thomson N.R."/>
            <person name="Chaudhuri R."/>
            <person name="Henderson I.R."/>
            <person name="Sperandio V."/>
            <person name="Ravel J."/>
        </authorList>
    </citation>
    <scope>NUCLEOTIDE SEQUENCE [LARGE SCALE GENOMIC DNA]</scope>
    <source>
        <strain>E24377A / ETEC</strain>
    </source>
</reference>
<protein>
    <recommendedName>
        <fullName evidence="1">High frequency lysogenization protein HflD</fullName>
    </recommendedName>
</protein>
<keyword id="KW-0997">Cell inner membrane</keyword>
<keyword id="KW-1003">Cell membrane</keyword>
<keyword id="KW-0175">Coiled coil</keyword>
<keyword id="KW-0963">Cytoplasm</keyword>
<keyword id="KW-0472">Membrane</keyword>
<keyword id="KW-1185">Reference proteome</keyword>
<proteinExistence type="inferred from homology"/>
<evidence type="ECO:0000255" key="1">
    <source>
        <dbReference type="HAMAP-Rule" id="MF_00695"/>
    </source>
</evidence>